<dbReference type="EC" id="4.2.1.9" evidence="1"/>
<dbReference type="EMBL" id="CP000608">
    <property type="protein sequence ID" value="ABO46902.1"/>
    <property type="molecule type" value="Genomic_DNA"/>
</dbReference>
<dbReference type="RefSeq" id="WP_003026265.1">
    <property type="nucleotide sequence ID" value="NC_009257.1"/>
</dbReference>
<dbReference type="SMR" id="A4IYA1"/>
<dbReference type="KEGG" id="ftw:FTW_1090"/>
<dbReference type="HOGENOM" id="CLU_014271_4_2_6"/>
<dbReference type="UniPathway" id="UPA00047">
    <property type="reaction ID" value="UER00057"/>
</dbReference>
<dbReference type="UniPathway" id="UPA00049">
    <property type="reaction ID" value="UER00061"/>
</dbReference>
<dbReference type="GO" id="GO:0051537">
    <property type="term" value="F:2 iron, 2 sulfur cluster binding"/>
    <property type="evidence" value="ECO:0007669"/>
    <property type="project" value="UniProtKB-UniRule"/>
</dbReference>
<dbReference type="GO" id="GO:0004160">
    <property type="term" value="F:dihydroxy-acid dehydratase activity"/>
    <property type="evidence" value="ECO:0007669"/>
    <property type="project" value="UniProtKB-UniRule"/>
</dbReference>
<dbReference type="GO" id="GO:0000287">
    <property type="term" value="F:magnesium ion binding"/>
    <property type="evidence" value="ECO:0007669"/>
    <property type="project" value="UniProtKB-UniRule"/>
</dbReference>
<dbReference type="GO" id="GO:0009097">
    <property type="term" value="P:isoleucine biosynthetic process"/>
    <property type="evidence" value="ECO:0007669"/>
    <property type="project" value="UniProtKB-UniRule"/>
</dbReference>
<dbReference type="GO" id="GO:0009099">
    <property type="term" value="P:L-valine biosynthetic process"/>
    <property type="evidence" value="ECO:0007669"/>
    <property type="project" value="UniProtKB-UniRule"/>
</dbReference>
<dbReference type="FunFam" id="3.50.30.80:FF:000001">
    <property type="entry name" value="Dihydroxy-acid dehydratase"/>
    <property type="match status" value="1"/>
</dbReference>
<dbReference type="Gene3D" id="3.50.30.80">
    <property type="entry name" value="IlvD/EDD C-terminal domain-like"/>
    <property type="match status" value="1"/>
</dbReference>
<dbReference type="HAMAP" id="MF_00012">
    <property type="entry name" value="IlvD"/>
    <property type="match status" value="1"/>
</dbReference>
<dbReference type="InterPro" id="IPR050165">
    <property type="entry name" value="DHAD_IlvD/Edd"/>
</dbReference>
<dbReference type="InterPro" id="IPR042096">
    <property type="entry name" value="Dihydro-acid_dehy_C"/>
</dbReference>
<dbReference type="InterPro" id="IPR004404">
    <property type="entry name" value="DihydroxyA_deHydtase"/>
</dbReference>
<dbReference type="InterPro" id="IPR020558">
    <property type="entry name" value="DiOHA_6PGluconate_deHydtase_CS"/>
</dbReference>
<dbReference type="InterPro" id="IPR056740">
    <property type="entry name" value="ILV_EDD_C"/>
</dbReference>
<dbReference type="InterPro" id="IPR000581">
    <property type="entry name" value="ILV_EDD_N"/>
</dbReference>
<dbReference type="InterPro" id="IPR037237">
    <property type="entry name" value="IlvD/EDD_N"/>
</dbReference>
<dbReference type="NCBIfam" id="TIGR00110">
    <property type="entry name" value="ilvD"/>
    <property type="match status" value="1"/>
</dbReference>
<dbReference type="NCBIfam" id="NF002068">
    <property type="entry name" value="PRK00911.1"/>
    <property type="match status" value="1"/>
</dbReference>
<dbReference type="PANTHER" id="PTHR21000">
    <property type="entry name" value="DIHYDROXY-ACID DEHYDRATASE DAD"/>
    <property type="match status" value="1"/>
</dbReference>
<dbReference type="PANTHER" id="PTHR21000:SF5">
    <property type="entry name" value="DIHYDROXY-ACID DEHYDRATASE, MITOCHONDRIAL"/>
    <property type="match status" value="1"/>
</dbReference>
<dbReference type="Pfam" id="PF24877">
    <property type="entry name" value="ILV_EDD_C"/>
    <property type="match status" value="1"/>
</dbReference>
<dbReference type="Pfam" id="PF00920">
    <property type="entry name" value="ILVD_EDD_N"/>
    <property type="match status" value="1"/>
</dbReference>
<dbReference type="SUPFAM" id="SSF143975">
    <property type="entry name" value="IlvD/EDD N-terminal domain-like"/>
    <property type="match status" value="1"/>
</dbReference>
<dbReference type="SUPFAM" id="SSF52016">
    <property type="entry name" value="LeuD/IlvD-like"/>
    <property type="match status" value="1"/>
</dbReference>
<dbReference type="PROSITE" id="PS00886">
    <property type="entry name" value="ILVD_EDD_1"/>
    <property type="match status" value="1"/>
</dbReference>
<dbReference type="PROSITE" id="PS00887">
    <property type="entry name" value="ILVD_EDD_2"/>
    <property type="match status" value="1"/>
</dbReference>
<organism>
    <name type="scientific">Francisella tularensis subsp. tularensis (strain WY96-3418)</name>
    <dbReference type="NCBI Taxonomy" id="418136"/>
    <lineage>
        <taxon>Bacteria</taxon>
        <taxon>Pseudomonadati</taxon>
        <taxon>Pseudomonadota</taxon>
        <taxon>Gammaproteobacteria</taxon>
        <taxon>Thiotrichales</taxon>
        <taxon>Francisellaceae</taxon>
        <taxon>Francisella</taxon>
    </lineage>
</organism>
<sequence>MKKVLNKYSRRLTEDKSQGASQAMLYGTEMNDADMHKPQIGIGSVWYEGNTCNMHLNQLAQFVKDSVEKENLKGMRFNTIGVSDGISMGTDGMSYSLQSRDLIADSIETVMSAHWYDGLVSIPGCDKNMPGCMMALGRLNRPGFVIYGGTIQAGVMRGKPIDIVTAFQSYGACLSGQITEQERQETIKKACPGAGACGGMYTANTMACAIEALGMSLPFSSSTSATSVEKVQECDKAGETIKNLLELDIKPRDIMTRKAFENAMVLITVMGGSTNAVLHLLAMASSVDVDLSIDDFQEIANKTPVLADFKPSGKYVMANLHAIGGTPAVMKMLLKAGMLHGDCLTVTGKTLAENLENVADLPEDNTIIHKLDNPIKKTGHLQILKGNVAPEGSVAKITGKEGEIFEGVANVFDSEEEMVAAVETGKVKKGDVIVIRYEGPKGGPGMPEMLKPTSLIMGAGLGQDVALITDGRFSGGSHGFIVGHITPEAYEGGMIALLENGDKITIDAINNVINVDLSDQEIAQRKSKWRASKQKASRGTLKKYIKTVSSASTGCVTDLD</sequence>
<name>ILVD_FRATW</name>
<reference key="1">
    <citation type="journal article" date="2007" name="PLoS ONE">
        <title>Complete genomic characterization of a pathogenic A.II strain of Francisella tularensis subspecies tularensis.</title>
        <authorList>
            <person name="Beckstrom-Sternberg S.M."/>
            <person name="Auerbach R.K."/>
            <person name="Godbole S."/>
            <person name="Pearson J.V."/>
            <person name="Beckstrom-Sternberg J.S."/>
            <person name="Deng Z."/>
            <person name="Munk C."/>
            <person name="Kubota K."/>
            <person name="Zhou Y."/>
            <person name="Bruce D."/>
            <person name="Noronha J."/>
            <person name="Scheuermann R.H."/>
            <person name="Wang A."/>
            <person name="Wei X."/>
            <person name="Wang J."/>
            <person name="Hao J."/>
            <person name="Wagner D.M."/>
            <person name="Brettin T.S."/>
            <person name="Brown N."/>
            <person name="Gilna P."/>
            <person name="Keim P.S."/>
        </authorList>
    </citation>
    <scope>NUCLEOTIDE SEQUENCE [LARGE SCALE GENOMIC DNA]</scope>
    <source>
        <strain>WY96-3418</strain>
    </source>
</reference>
<feature type="chain" id="PRO_1000089387" description="Dihydroxy-acid dehydratase">
    <location>
        <begin position="1"/>
        <end position="560"/>
    </location>
</feature>
<feature type="active site" description="Proton acceptor" evidence="1">
    <location>
        <position position="474"/>
    </location>
</feature>
<feature type="binding site" evidence="1">
    <location>
        <position position="52"/>
    </location>
    <ligand>
        <name>[2Fe-2S] cluster</name>
        <dbReference type="ChEBI" id="CHEBI:190135"/>
    </ligand>
</feature>
<feature type="binding site" evidence="1">
    <location>
        <position position="84"/>
    </location>
    <ligand>
        <name>Mg(2+)</name>
        <dbReference type="ChEBI" id="CHEBI:18420"/>
    </ligand>
</feature>
<feature type="binding site" evidence="1">
    <location>
        <position position="125"/>
    </location>
    <ligand>
        <name>[2Fe-2S] cluster</name>
        <dbReference type="ChEBI" id="CHEBI:190135"/>
    </ligand>
</feature>
<feature type="binding site" evidence="1">
    <location>
        <position position="126"/>
    </location>
    <ligand>
        <name>Mg(2+)</name>
        <dbReference type="ChEBI" id="CHEBI:18420"/>
    </ligand>
</feature>
<feature type="binding site" description="via carbamate group" evidence="1">
    <location>
        <position position="127"/>
    </location>
    <ligand>
        <name>Mg(2+)</name>
        <dbReference type="ChEBI" id="CHEBI:18420"/>
    </ligand>
</feature>
<feature type="binding site" evidence="1">
    <location>
        <position position="197"/>
    </location>
    <ligand>
        <name>[2Fe-2S] cluster</name>
        <dbReference type="ChEBI" id="CHEBI:190135"/>
    </ligand>
</feature>
<feature type="binding site" evidence="1">
    <location>
        <position position="448"/>
    </location>
    <ligand>
        <name>Mg(2+)</name>
        <dbReference type="ChEBI" id="CHEBI:18420"/>
    </ligand>
</feature>
<feature type="modified residue" description="N6-carboxylysine" evidence="1">
    <location>
        <position position="127"/>
    </location>
</feature>
<proteinExistence type="inferred from homology"/>
<accession>A4IYA1</accession>
<keyword id="KW-0001">2Fe-2S</keyword>
<keyword id="KW-0028">Amino-acid biosynthesis</keyword>
<keyword id="KW-0100">Branched-chain amino acid biosynthesis</keyword>
<keyword id="KW-0408">Iron</keyword>
<keyword id="KW-0411">Iron-sulfur</keyword>
<keyword id="KW-0456">Lyase</keyword>
<keyword id="KW-0460">Magnesium</keyword>
<keyword id="KW-0479">Metal-binding</keyword>
<gene>
    <name evidence="1" type="primary">ilvD</name>
    <name type="ordered locus">FTW_1090</name>
</gene>
<evidence type="ECO:0000255" key="1">
    <source>
        <dbReference type="HAMAP-Rule" id="MF_00012"/>
    </source>
</evidence>
<comment type="function">
    <text evidence="1">Functions in the biosynthesis of branched-chain amino acids. Catalyzes the dehydration of (2R,3R)-2,3-dihydroxy-3-methylpentanoate (2,3-dihydroxy-3-methylvalerate) into 2-oxo-3-methylpentanoate (2-oxo-3-methylvalerate) and of (2R)-2,3-dihydroxy-3-methylbutanoate (2,3-dihydroxyisovalerate) into 2-oxo-3-methylbutanoate (2-oxoisovalerate), the penultimate precursor to L-isoleucine and L-valine, respectively.</text>
</comment>
<comment type="catalytic activity">
    <reaction evidence="1">
        <text>(2R)-2,3-dihydroxy-3-methylbutanoate = 3-methyl-2-oxobutanoate + H2O</text>
        <dbReference type="Rhea" id="RHEA:24809"/>
        <dbReference type="ChEBI" id="CHEBI:11851"/>
        <dbReference type="ChEBI" id="CHEBI:15377"/>
        <dbReference type="ChEBI" id="CHEBI:49072"/>
        <dbReference type="EC" id="4.2.1.9"/>
    </reaction>
    <physiologicalReaction direction="left-to-right" evidence="1">
        <dbReference type="Rhea" id="RHEA:24810"/>
    </physiologicalReaction>
</comment>
<comment type="catalytic activity">
    <reaction evidence="1">
        <text>(2R,3R)-2,3-dihydroxy-3-methylpentanoate = (S)-3-methyl-2-oxopentanoate + H2O</text>
        <dbReference type="Rhea" id="RHEA:27694"/>
        <dbReference type="ChEBI" id="CHEBI:15377"/>
        <dbReference type="ChEBI" id="CHEBI:35146"/>
        <dbReference type="ChEBI" id="CHEBI:49258"/>
        <dbReference type="EC" id="4.2.1.9"/>
    </reaction>
    <physiologicalReaction direction="left-to-right" evidence="1">
        <dbReference type="Rhea" id="RHEA:27695"/>
    </physiologicalReaction>
</comment>
<comment type="cofactor">
    <cofactor evidence="1">
        <name>[2Fe-2S] cluster</name>
        <dbReference type="ChEBI" id="CHEBI:190135"/>
    </cofactor>
    <text evidence="1">Binds 1 [2Fe-2S] cluster per subunit. This cluster acts as a Lewis acid cofactor.</text>
</comment>
<comment type="cofactor">
    <cofactor evidence="1">
        <name>Mg(2+)</name>
        <dbReference type="ChEBI" id="CHEBI:18420"/>
    </cofactor>
</comment>
<comment type="pathway">
    <text evidence="1">Amino-acid biosynthesis; L-isoleucine biosynthesis; L-isoleucine from 2-oxobutanoate: step 3/4.</text>
</comment>
<comment type="pathway">
    <text evidence="1">Amino-acid biosynthesis; L-valine biosynthesis; L-valine from pyruvate: step 3/4.</text>
</comment>
<comment type="subunit">
    <text evidence="1">Homodimer.</text>
</comment>
<comment type="similarity">
    <text evidence="1">Belongs to the IlvD/Edd family.</text>
</comment>
<protein>
    <recommendedName>
        <fullName evidence="1">Dihydroxy-acid dehydratase</fullName>
        <shortName evidence="1">DAD</shortName>
        <ecNumber evidence="1">4.2.1.9</ecNumber>
    </recommendedName>
</protein>